<accession>P11566</accession>
<accession>D9PY31</accession>
<reference key="1">
    <citation type="journal article" date="1988" name="J. Bacteriol.">
        <title>Cloning and characterization of the methyl coenzyme M reductase genes from Methanobacterium thermoautotrophicum.</title>
        <authorList>
            <person name="Bokranz M."/>
            <person name="Baeumner G."/>
            <person name="Allmansberger R."/>
            <person name="Ankel-Fuchs D."/>
            <person name="Klein A."/>
        </authorList>
    </citation>
    <scope>NUCLEOTIDE SEQUENCE [GENOMIC DNA]</scope>
    <source>
        <strain>ATCC BAA-927 / DSM 2133 / JCM 14651 / NBRC 100331 / OCM 82 / Marburg</strain>
    </source>
</reference>
<reference key="2">
    <citation type="journal article" date="2010" name="J. Bacteriol.">
        <title>Complete genome sequence of Methanothermobacter marburgensis, a methanoarchaeon model organism.</title>
        <authorList>
            <person name="Liesegang H."/>
            <person name="Kaster A.K."/>
            <person name="Wiezer A."/>
            <person name="Goenrich M."/>
            <person name="Wollherr A."/>
            <person name="Seedorf H."/>
            <person name="Gottschalk G."/>
            <person name="Thauer R.K."/>
        </authorList>
    </citation>
    <scope>NUCLEOTIDE SEQUENCE [LARGE SCALE GENOMIC DNA]</scope>
    <source>
        <strain>ATCC BAA-927 / DSM 2133 / JCM 14651 / NBRC 100331 / OCM 82 / Marburg</strain>
    </source>
</reference>
<gene>
    <name type="primary">mcrC</name>
    <name type="synonym">mcrE</name>
    <name type="ordered locus">MTBMA_c15500</name>
</gene>
<feature type="chain" id="PRO_0000147488" description="Methyl-coenzyme M reductase I operon protein C">
    <location>
        <begin position="1"/>
        <end position="198"/>
    </location>
</feature>
<name>MCRC_METTM</name>
<comment type="subunit">
    <text>MCR is composed of three subunits: alpha, beta, and gamma. The function of proteins C and D is not known.</text>
</comment>
<comment type="developmental stage">
    <text>There are two MCR complexes in this bacteria. MCR II is expressed in the early growth phase. Late growth cells contains mostly MCR I.</text>
</comment>
<keyword id="KW-0484">Methanogenesis</keyword>
<organism>
    <name type="scientific">Methanothermobacter marburgensis (strain ATCC BAA-927 / DSM 2133 / JCM 14651 / NBRC 100331 / OCM 82 / Marburg)</name>
    <name type="common">Methanobacterium thermoautotrophicum</name>
    <dbReference type="NCBI Taxonomy" id="79929"/>
    <lineage>
        <taxon>Archaea</taxon>
        <taxon>Methanobacteriati</taxon>
        <taxon>Methanobacteriota</taxon>
        <taxon>Methanomada group</taxon>
        <taxon>Methanobacteria</taxon>
        <taxon>Methanobacteriales</taxon>
        <taxon>Methanobacteriaceae</taxon>
        <taxon>Methanothermobacter</taxon>
    </lineage>
</organism>
<protein>
    <recommendedName>
        <fullName>Methyl-coenzyme M reductase I operon protein C</fullName>
    </recommendedName>
</protein>
<dbReference type="EMBL" id="X07794">
    <property type="protein sequence ID" value="CAA30637.1"/>
    <property type="molecule type" value="Genomic_DNA"/>
</dbReference>
<dbReference type="EMBL" id="CP001710">
    <property type="protein sequence ID" value="ADL59129.1"/>
    <property type="molecule type" value="Genomic_DNA"/>
</dbReference>
<dbReference type="RefSeq" id="WP_013296339.1">
    <property type="nucleotide sequence ID" value="NC_014408.1"/>
</dbReference>
<dbReference type="SMR" id="P11566"/>
<dbReference type="STRING" id="79929.MTBMA_c15500"/>
<dbReference type="PaxDb" id="79929-MTBMA_c15500"/>
<dbReference type="GeneID" id="77400321"/>
<dbReference type="GeneID" id="9705259"/>
<dbReference type="KEGG" id="mmg:MTBMA_c15500"/>
<dbReference type="PATRIC" id="fig|79929.8.peg.1503"/>
<dbReference type="HOGENOM" id="CLU_099719_0_0_2"/>
<dbReference type="OrthoDB" id="113954at2157"/>
<dbReference type="Proteomes" id="UP000000345">
    <property type="component" value="Chromosome"/>
</dbReference>
<dbReference type="GO" id="GO:0015948">
    <property type="term" value="P:methanogenesis"/>
    <property type="evidence" value="ECO:0007669"/>
    <property type="project" value="UniProtKB-KW"/>
</dbReference>
<dbReference type="InterPro" id="IPR007687">
    <property type="entry name" value="Me_CoM_Rdtase_prot-C"/>
</dbReference>
<dbReference type="NCBIfam" id="TIGR03264">
    <property type="entry name" value="met_CoM_red_C"/>
    <property type="match status" value="1"/>
</dbReference>
<dbReference type="PIRSF" id="PIRSF003137">
    <property type="entry name" value="McrC"/>
    <property type="match status" value="1"/>
</dbReference>
<sequence length="198" mass="21235">MIGKCTHVVDCRETMGMGEGGGIAQRGTFAQCGSEVLAVAMSPGRRHITKPVCEITFALREANIMTSTLVLNAGAGVPQDAPSAGAGSLFGLTPAEVEQMKRHRLLVVHLGGVKNHITYKARLILRNVDRPCIVICEYPVDFEDFAKIGVKTRVVMPDEPKTKGTIVDIVSGVIRGETCPQEKLDEIIRKVKLALGGA</sequence>
<proteinExistence type="evidence at transcript level"/>